<organism>
    <name type="scientific">Asparagus officinalis</name>
    <name type="common">Garden asparagus</name>
    <dbReference type="NCBI Taxonomy" id="4686"/>
    <lineage>
        <taxon>Eukaryota</taxon>
        <taxon>Viridiplantae</taxon>
        <taxon>Streptophyta</taxon>
        <taxon>Embryophyta</taxon>
        <taxon>Tracheophyta</taxon>
        <taxon>Spermatophyta</taxon>
        <taxon>Magnoliopsida</taxon>
        <taxon>Liliopsida</taxon>
        <taxon>Asparagales</taxon>
        <taxon>Asparagaceae</taxon>
        <taxon>Asparagoideae</taxon>
        <taxon>Asparagus</taxon>
    </lineage>
</organism>
<dbReference type="EMBL" id="AB033828">
    <property type="protein sequence ID" value="BAB20706.1"/>
    <property type="molecule type" value="mRNA"/>
</dbReference>
<dbReference type="PIR" id="JT0870">
    <property type="entry name" value="JT0870"/>
</dbReference>
<dbReference type="GO" id="GO:0005576">
    <property type="term" value="C:extracellular region"/>
    <property type="evidence" value="ECO:0007669"/>
    <property type="project" value="UniProtKB-SubCell"/>
</dbReference>
<dbReference type="GO" id="GO:0008083">
    <property type="term" value="F:growth factor activity"/>
    <property type="evidence" value="ECO:0007669"/>
    <property type="project" value="UniProtKB-KW"/>
</dbReference>
<dbReference type="GO" id="GO:0030154">
    <property type="term" value="P:cell differentiation"/>
    <property type="evidence" value="ECO:0007669"/>
    <property type="project" value="UniProtKB-KW"/>
</dbReference>
<dbReference type="GO" id="GO:0008283">
    <property type="term" value="P:cell population proliferation"/>
    <property type="evidence" value="ECO:0007669"/>
    <property type="project" value="InterPro"/>
</dbReference>
<dbReference type="InterPro" id="IPR009438">
    <property type="entry name" value="Phytosulfokine"/>
</dbReference>
<dbReference type="PANTHER" id="PTHR33285">
    <property type="entry name" value="PHYTOSULFOKINES 3"/>
    <property type="match status" value="1"/>
</dbReference>
<dbReference type="PANTHER" id="PTHR33285:SF55">
    <property type="entry name" value="PHYTOSULFOKINES 3"/>
    <property type="match status" value="1"/>
</dbReference>
<dbReference type="Pfam" id="PF06404">
    <property type="entry name" value="PSK"/>
    <property type="match status" value="1"/>
</dbReference>
<protein>
    <recommendedName>
        <fullName>Phytosulfokines</fullName>
    </recommendedName>
    <component>
        <recommendedName>
            <fullName>Phytosulfokine-alpha</fullName>
            <shortName>PSK-alpha</shortName>
            <shortName>Phytosulfokine-a</shortName>
        </recommendedName>
    </component>
    <component>
        <recommendedName>
            <fullName>Phytosulfokine-beta</fullName>
            <shortName>PSK-beta</shortName>
            <shortName>Phytosulfokine-b</shortName>
        </recommendedName>
    </component>
</protein>
<reference key="1">
    <citation type="submission" date="1999-10" db="EMBL/GenBank/DDBJ databases">
        <title>Asparagus preprophytosulfokine.</title>
        <authorList>
            <person name="Matsubayashi Y."/>
            <person name="Goto T."/>
            <person name="Sakagami Y."/>
        </authorList>
    </citation>
    <scope>NUCLEOTIDE SEQUENCE [MRNA]</scope>
</reference>
<reference key="2">
    <citation type="journal article" date="1996" name="Proc. Natl. Acad. Sci. U.S.A.">
        <title>Phytosulfokine, sulfated peptides that induce the proliferation of single mesophyll cells of Asparagus officinalis L.</title>
        <authorList>
            <person name="Matsubayashi Y."/>
            <person name="Sakagami Y."/>
        </authorList>
    </citation>
    <scope>PROTEIN SEQUENCE OF 67-71</scope>
    <scope>SULFATION AT TYR-67 AND TYR-69</scope>
</reference>
<reference key="3">
    <citation type="journal article" date="1996" name="Biochem. Biophys. Res. Commun.">
        <title>Active fragments and analogs of the plant growth factor, phytosulfokine: structure-activity relationships.</title>
        <authorList>
            <person name="Matsubayashi Y."/>
            <person name="Hanai H."/>
            <person name="Hara O."/>
            <person name="Sakagami Y."/>
        </authorList>
    </citation>
    <scope>PROTEIN SEQUENCE OF 67-71</scope>
    <scope>MUTAGENESIS OF ILE-68</scope>
    <scope>CHARACTERIZATION</scope>
</reference>
<gene>
    <name type="primary">PSK</name>
</gene>
<keyword id="KW-0217">Developmental protein</keyword>
<keyword id="KW-0221">Differentiation</keyword>
<keyword id="KW-0903">Direct protein sequencing</keyword>
<keyword id="KW-0339">Growth factor</keyword>
<keyword id="KW-0964">Secreted</keyword>
<keyword id="KW-0732">Signal</keyword>
<keyword id="KW-0765">Sulfation</keyword>
<sequence length="75" mass="8274">MSSKAITLLLIALLFSLSLAQAARPLQPADSTKSVHVIPEKVHDEACEGVGEEECLMRRTLTAHVDYIYTQDHNP</sequence>
<evidence type="ECO:0000255" key="1"/>
<evidence type="ECO:0000269" key="2">
    <source>
    </source>
</evidence>
<evidence type="ECO:0000269" key="3">
    <source>
    </source>
</evidence>
<evidence type="ECO:0000305" key="4"/>
<feature type="signal peptide" evidence="1">
    <location>
        <begin position="1"/>
        <end position="22"/>
    </location>
</feature>
<feature type="propeptide" id="PRO_0000024056" evidence="1">
    <location>
        <begin position="23"/>
        <end position="66"/>
    </location>
</feature>
<feature type="peptide" id="PRO_0000024057" description="Phytosulfokine-alpha">
    <location>
        <begin position="67"/>
        <end position="71"/>
    </location>
</feature>
<feature type="peptide" id="PRO_0000024058" description="Phytosulfokine-beta">
    <location>
        <begin position="67"/>
        <end position="70"/>
    </location>
</feature>
<feature type="propeptide" id="PRO_0000024059" evidence="1">
    <location>
        <begin position="72"/>
        <end position="75"/>
    </location>
</feature>
<feature type="modified residue" description="Sulfotyrosine" evidence="2">
    <location>
        <position position="67"/>
    </location>
</feature>
<feature type="modified residue" description="Sulfotyrosine" evidence="2">
    <location>
        <position position="69"/>
    </location>
</feature>
<feature type="mutagenesis site" description="Activity decreased 20-fold." evidence="3">
    <original>I</original>
    <variation>V</variation>
    <location>
        <position position="68"/>
    </location>
</feature>
<comment type="function">
    <text>Promotes plant cell differentiation, organogenesis and somatic embryogenesis as well as cell proliferation.</text>
</comment>
<comment type="subcellular location">
    <subcellularLocation>
        <location>Secreted</location>
    </subcellularLocation>
</comment>
<comment type="induction">
    <text>Expression is regulated by a signal transduction pathway activated by auxin and cytokinin.</text>
</comment>
<comment type="PTM">
    <text evidence="2">Sulfation is important for activity and for the binding to a putative membrane receptor. Deletion of the sulfate groups of Tyr-67 and Tyr-69 resulted in compounds with respectively 0.6% and 4% of the activity.</text>
</comment>
<comment type="PTM">
    <text>PSK-alpha is produced by endopeptidase digestion. PSK-beta is produced from PSK-alpha by exopeptidase digestion.</text>
</comment>
<comment type="miscellaneous">
    <text>The N-terminal tripeptide (YIY) is the active core.</text>
</comment>
<comment type="similarity">
    <text evidence="4">Belongs to the phytosulfokine family.</text>
</comment>
<accession>Q9FS10</accession>
<name>PSK_ASPOF</name>
<proteinExistence type="evidence at protein level"/>